<organism>
    <name type="scientific">Mus musculus</name>
    <name type="common">Mouse</name>
    <dbReference type="NCBI Taxonomy" id="10090"/>
    <lineage>
        <taxon>Eukaryota</taxon>
        <taxon>Metazoa</taxon>
        <taxon>Chordata</taxon>
        <taxon>Craniata</taxon>
        <taxon>Vertebrata</taxon>
        <taxon>Euteleostomi</taxon>
        <taxon>Mammalia</taxon>
        <taxon>Eutheria</taxon>
        <taxon>Euarchontoglires</taxon>
        <taxon>Glires</taxon>
        <taxon>Rodentia</taxon>
        <taxon>Myomorpha</taxon>
        <taxon>Muroidea</taxon>
        <taxon>Muridae</taxon>
        <taxon>Murinae</taxon>
        <taxon>Mus</taxon>
        <taxon>Mus</taxon>
    </lineage>
</organism>
<feature type="chain" id="PRO_0000218641" description="Large neutral amino acids transporter small subunit 3">
    <location>
        <begin position="1"/>
        <end position="564"/>
    </location>
</feature>
<feature type="transmembrane region" description="Helical" evidence="2">
    <location>
        <begin position="20"/>
        <end position="40"/>
    </location>
</feature>
<feature type="transmembrane region" description="Helical" evidence="2">
    <location>
        <begin position="78"/>
        <end position="98"/>
    </location>
</feature>
<feature type="transmembrane region" description="Helical" evidence="2">
    <location>
        <begin position="105"/>
        <end position="124"/>
    </location>
</feature>
<feature type="transmembrane region" description="Helical" evidence="2">
    <location>
        <begin position="131"/>
        <end position="151"/>
    </location>
</feature>
<feature type="transmembrane region" description="Helical" evidence="2">
    <location>
        <begin position="165"/>
        <end position="185"/>
    </location>
</feature>
<feature type="transmembrane region" description="Helical" evidence="2">
    <location>
        <begin position="191"/>
        <end position="211"/>
    </location>
</feature>
<feature type="transmembrane region" description="Helical" evidence="2">
    <location>
        <begin position="303"/>
        <end position="323"/>
    </location>
</feature>
<feature type="transmembrane region" description="Helical" evidence="2">
    <location>
        <begin position="357"/>
        <end position="377"/>
    </location>
</feature>
<feature type="transmembrane region" description="Helical" evidence="2">
    <location>
        <begin position="424"/>
        <end position="444"/>
    </location>
</feature>
<feature type="transmembrane region" description="Helical" evidence="2">
    <location>
        <begin position="451"/>
        <end position="471"/>
    </location>
</feature>
<feature type="transmembrane region" description="Helical" evidence="2">
    <location>
        <begin position="490"/>
        <end position="510"/>
    </location>
</feature>
<feature type="transmembrane region" description="Helical" evidence="2">
    <location>
        <begin position="515"/>
        <end position="535"/>
    </location>
</feature>
<feature type="modified residue" description="Phosphoserine" evidence="1">
    <location>
        <position position="262"/>
    </location>
</feature>
<feature type="modified residue" description="Phosphoserine" evidence="1">
    <location>
        <position position="267"/>
    </location>
</feature>
<feature type="modified residue" description="Phosphoserine" evidence="11 12">
    <location>
        <position position="398"/>
    </location>
</feature>
<feature type="glycosylation site" description="N-linked (GlcNAc...) asparagine" evidence="2">
    <location>
        <position position="54"/>
    </location>
</feature>
<feature type="glycosylation site" description="N-linked (GlcNAc...) asparagine" evidence="5">
    <location>
        <position position="57"/>
    </location>
</feature>
<feature type="glycosylation site" description="N-linked (GlcNAc...) asparagine" evidence="2">
    <location>
        <position position="396"/>
    </location>
</feature>
<feature type="glycosylation site" description="N-linked (GlcNAc...) asparagine" evidence="2">
    <location>
        <position position="558"/>
    </location>
</feature>
<accession>Q8BSM7</accession>
<accession>A2ATS3</accession>
<accession>Q9D0H7</accession>
<protein>
    <recommendedName>
        <fullName evidence="7">Large neutral amino acids transporter small subunit 3</fullName>
    </recommendedName>
    <alternativeName>
        <fullName>L-type amino acid transporter 3</fullName>
    </alternativeName>
    <alternativeName>
        <fullName>Solute carrier family 43 member 1</fullName>
    </alternativeName>
</protein>
<name>LAT3_MOUSE</name>
<comment type="function">
    <text evidence="4">Uniport that mediates the transport of neutral amino acids such as L-leucine, L-isoleucine, L-valine, and L-phenylalanine (PubMed:17322374). The transport activity is sodium ions-independent, electroneutral and mediated by a facilitated diffusion (PubMed:17322374).</text>
</comment>
<comment type="catalytic activity">
    <reaction evidence="1">
        <text>D-leucine(in) = D-leucine(out)</text>
        <dbReference type="Rhea" id="RHEA:73015"/>
        <dbReference type="ChEBI" id="CHEBI:143079"/>
    </reaction>
</comment>
<comment type="catalytic activity">
    <reaction evidence="4">
        <text>L-leucine(in) = L-leucine(out)</text>
        <dbReference type="Rhea" id="RHEA:73011"/>
        <dbReference type="ChEBI" id="CHEBI:57427"/>
    </reaction>
</comment>
<comment type="catalytic activity">
    <reaction evidence="4">
        <text>L-isoleucine(in) = L-isoleucine(out)</text>
        <dbReference type="Rhea" id="RHEA:70943"/>
        <dbReference type="ChEBI" id="CHEBI:58045"/>
    </reaction>
</comment>
<comment type="catalytic activity">
    <reaction evidence="1">
        <text>L-methionine(in) = L-methionine(out)</text>
        <dbReference type="Rhea" id="RHEA:70939"/>
        <dbReference type="ChEBI" id="CHEBI:57844"/>
    </reaction>
</comment>
<comment type="catalytic activity">
    <reaction evidence="4">
        <text>L-phenylalanine(in) = L-phenylalanine(out)</text>
        <dbReference type="Rhea" id="RHEA:27950"/>
        <dbReference type="ChEBI" id="CHEBI:58095"/>
    </reaction>
</comment>
<comment type="catalytic activity">
    <reaction evidence="4">
        <text>L-valine(in) = L-valine(out)</text>
        <dbReference type="Rhea" id="RHEA:29703"/>
        <dbReference type="ChEBI" id="CHEBI:57762"/>
    </reaction>
</comment>
<comment type="subcellular location">
    <subcellularLocation>
        <location evidence="4">Cell membrane</location>
        <topology evidence="2">Multi-pass membrane protein</topology>
    </subcellularLocation>
    <subcellularLocation>
        <location evidence="1">Apical cell membrane</location>
        <topology evidence="2">Multi-pass membrane protein</topology>
    </subcellularLocation>
    <subcellularLocation>
        <location evidence="4">Endoplasmic reticulum membrane</location>
        <topology evidence="2">Multi-pass membrane protein</topology>
    </subcellularLocation>
    <text evidence="1 4">Located in the apical plasma membrane of the podocyte foot processes (By similarity). Located in the plasma membrane of liver and skeletal muscle, and in the endoplasmic reticulum and in crystalline inclusions in pancreatic acinar cells (PubMed:17322374).</text>
</comment>
<comment type="tissue specificity">
    <text evidence="4 6">Expressed in the kidney cortex as well as liver, pancreas, and skeletal muscle (PubMed:19443642). In kidney expressed in the glomerular tuft (at protein level) (PubMed:19443642). Expressed in liver, skeletal muscle and pancreas (at protein level) (PubMed:17322374).</text>
</comment>
<comment type="induction">
    <text evidence="4 6">By nutrient starvation.</text>
</comment>
<comment type="similarity">
    <text evidence="7">Belongs to the SLC43A transporter (TC 2.A.1.44) family.</text>
</comment>
<comment type="sequence caution" evidence="7">
    <conflict type="frameshift">
        <sequence resource="EMBL-CDS" id="BAB27605"/>
    </conflict>
</comment>
<comment type="sequence caution" evidence="7">
    <conflict type="frameshift">
        <sequence resource="EMBL-CDS" id="BAC27305"/>
    </conflict>
</comment>
<gene>
    <name evidence="10" type="primary">Slc43a1</name>
    <name type="synonym">Lat3</name>
</gene>
<proteinExistence type="evidence at protein level"/>
<reference evidence="7 9" key="1">
    <citation type="submission" date="2003-02" db="EMBL/GenBank/DDBJ databases">
        <title>Identification and characterization of mouse LAT3 system L amino acid transporter.</title>
        <authorList>
            <person name="Babu E."/>
            <person name="Kanai Y."/>
            <person name="Chairoungdua A."/>
            <person name="Li Y."/>
            <person name="Anzai N."/>
            <person name="Endou H."/>
        </authorList>
    </citation>
    <scope>NUCLEOTIDE SEQUENCE [MRNA]</scope>
    <source>
        <strain evidence="9">FVB/N</strain>
        <tissue evidence="9">Salivary gland</tissue>
    </source>
</reference>
<reference key="2">
    <citation type="journal article" date="2005" name="Science">
        <title>The transcriptional landscape of the mammalian genome.</title>
        <authorList>
            <person name="Carninci P."/>
            <person name="Kasukawa T."/>
            <person name="Katayama S."/>
            <person name="Gough J."/>
            <person name="Frith M.C."/>
            <person name="Maeda N."/>
            <person name="Oyama R."/>
            <person name="Ravasi T."/>
            <person name="Lenhard B."/>
            <person name="Wells C."/>
            <person name="Kodzius R."/>
            <person name="Shimokawa K."/>
            <person name="Bajic V.B."/>
            <person name="Brenner S.E."/>
            <person name="Batalov S."/>
            <person name="Forrest A.R."/>
            <person name="Zavolan M."/>
            <person name="Davis M.J."/>
            <person name="Wilming L.G."/>
            <person name="Aidinis V."/>
            <person name="Allen J.E."/>
            <person name="Ambesi-Impiombato A."/>
            <person name="Apweiler R."/>
            <person name="Aturaliya R.N."/>
            <person name="Bailey T.L."/>
            <person name="Bansal M."/>
            <person name="Baxter L."/>
            <person name="Beisel K.W."/>
            <person name="Bersano T."/>
            <person name="Bono H."/>
            <person name="Chalk A.M."/>
            <person name="Chiu K.P."/>
            <person name="Choudhary V."/>
            <person name="Christoffels A."/>
            <person name="Clutterbuck D.R."/>
            <person name="Crowe M.L."/>
            <person name="Dalla E."/>
            <person name="Dalrymple B.P."/>
            <person name="de Bono B."/>
            <person name="Della Gatta G."/>
            <person name="di Bernardo D."/>
            <person name="Down T."/>
            <person name="Engstrom P."/>
            <person name="Fagiolini M."/>
            <person name="Faulkner G."/>
            <person name="Fletcher C.F."/>
            <person name="Fukushima T."/>
            <person name="Furuno M."/>
            <person name="Futaki S."/>
            <person name="Gariboldi M."/>
            <person name="Georgii-Hemming P."/>
            <person name="Gingeras T.R."/>
            <person name="Gojobori T."/>
            <person name="Green R.E."/>
            <person name="Gustincich S."/>
            <person name="Harbers M."/>
            <person name="Hayashi Y."/>
            <person name="Hensch T.K."/>
            <person name="Hirokawa N."/>
            <person name="Hill D."/>
            <person name="Huminiecki L."/>
            <person name="Iacono M."/>
            <person name="Ikeo K."/>
            <person name="Iwama A."/>
            <person name="Ishikawa T."/>
            <person name="Jakt M."/>
            <person name="Kanapin A."/>
            <person name="Katoh M."/>
            <person name="Kawasawa Y."/>
            <person name="Kelso J."/>
            <person name="Kitamura H."/>
            <person name="Kitano H."/>
            <person name="Kollias G."/>
            <person name="Krishnan S.P."/>
            <person name="Kruger A."/>
            <person name="Kummerfeld S.K."/>
            <person name="Kurochkin I.V."/>
            <person name="Lareau L.F."/>
            <person name="Lazarevic D."/>
            <person name="Lipovich L."/>
            <person name="Liu J."/>
            <person name="Liuni S."/>
            <person name="McWilliam S."/>
            <person name="Madan Babu M."/>
            <person name="Madera M."/>
            <person name="Marchionni L."/>
            <person name="Matsuda H."/>
            <person name="Matsuzawa S."/>
            <person name="Miki H."/>
            <person name="Mignone F."/>
            <person name="Miyake S."/>
            <person name="Morris K."/>
            <person name="Mottagui-Tabar S."/>
            <person name="Mulder N."/>
            <person name="Nakano N."/>
            <person name="Nakauchi H."/>
            <person name="Ng P."/>
            <person name="Nilsson R."/>
            <person name="Nishiguchi S."/>
            <person name="Nishikawa S."/>
            <person name="Nori F."/>
            <person name="Ohara O."/>
            <person name="Okazaki Y."/>
            <person name="Orlando V."/>
            <person name="Pang K.C."/>
            <person name="Pavan W.J."/>
            <person name="Pavesi G."/>
            <person name="Pesole G."/>
            <person name="Petrovsky N."/>
            <person name="Piazza S."/>
            <person name="Reed J."/>
            <person name="Reid J.F."/>
            <person name="Ring B.Z."/>
            <person name="Ringwald M."/>
            <person name="Rost B."/>
            <person name="Ruan Y."/>
            <person name="Salzberg S.L."/>
            <person name="Sandelin A."/>
            <person name="Schneider C."/>
            <person name="Schoenbach C."/>
            <person name="Sekiguchi K."/>
            <person name="Semple C.A."/>
            <person name="Seno S."/>
            <person name="Sessa L."/>
            <person name="Sheng Y."/>
            <person name="Shibata Y."/>
            <person name="Shimada H."/>
            <person name="Shimada K."/>
            <person name="Silva D."/>
            <person name="Sinclair B."/>
            <person name="Sperling S."/>
            <person name="Stupka E."/>
            <person name="Sugiura K."/>
            <person name="Sultana R."/>
            <person name="Takenaka Y."/>
            <person name="Taki K."/>
            <person name="Tammoja K."/>
            <person name="Tan S.L."/>
            <person name="Tang S."/>
            <person name="Taylor M.S."/>
            <person name="Tegner J."/>
            <person name="Teichmann S.A."/>
            <person name="Ueda H.R."/>
            <person name="van Nimwegen E."/>
            <person name="Verardo R."/>
            <person name="Wei C.L."/>
            <person name="Yagi K."/>
            <person name="Yamanishi H."/>
            <person name="Zabarovsky E."/>
            <person name="Zhu S."/>
            <person name="Zimmer A."/>
            <person name="Hide W."/>
            <person name="Bult C."/>
            <person name="Grimmond S.M."/>
            <person name="Teasdale R.D."/>
            <person name="Liu E.T."/>
            <person name="Brusic V."/>
            <person name="Quackenbush J."/>
            <person name="Wahlestedt C."/>
            <person name="Mattick J.S."/>
            <person name="Hume D.A."/>
            <person name="Kai C."/>
            <person name="Sasaki D."/>
            <person name="Tomaru Y."/>
            <person name="Fukuda S."/>
            <person name="Kanamori-Katayama M."/>
            <person name="Suzuki M."/>
            <person name="Aoki J."/>
            <person name="Arakawa T."/>
            <person name="Iida J."/>
            <person name="Imamura K."/>
            <person name="Itoh M."/>
            <person name="Kato T."/>
            <person name="Kawaji H."/>
            <person name="Kawagashira N."/>
            <person name="Kawashima T."/>
            <person name="Kojima M."/>
            <person name="Kondo S."/>
            <person name="Konno H."/>
            <person name="Nakano K."/>
            <person name="Ninomiya N."/>
            <person name="Nishio T."/>
            <person name="Okada M."/>
            <person name="Plessy C."/>
            <person name="Shibata K."/>
            <person name="Shiraki T."/>
            <person name="Suzuki S."/>
            <person name="Tagami M."/>
            <person name="Waki K."/>
            <person name="Watahiki A."/>
            <person name="Okamura-Oho Y."/>
            <person name="Suzuki H."/>
            <person name="Kawai J."/>
            <person name="Hayashizaki Y."/>
        </authorList>
    </citation>
    <scope>NUCLEOTIDE SEQUENCE [LARGE SCALE MRNA]</scope>
    <source>
        <strain>C57BL/6J</strain>
        <tissue>Forelimb</tissue>
    </source>
</reference>
<reference key="3">
    <citation type="journal article" date="2009" name="PLoS Biol.">
        <title>Lineage-specific biology revealed by a finished genome assembly of the mouse.</title>
        <authorList>
            <person name="Church D.M."/>
            <person name="Goodstadt L."/>
            <person name="Hillier L.W."/>
            <person name="Zody M.C."/>
            <person name="Goldstein S."/>
            <person name="She X."/>
            <person name="Bult C.J."/>
            <person name="Agarwala R."/>
            <person name="Cherry J.L."/>
            <person name="DiCuccio M."/>
            <person name="Hlavina W."/>
            <person name="Kapustin Y."/>
            <person name="Meric P."/>
            <person name="Maglott D."/>
            <person name="Birtle Z."/>
            <person name="Marques A.C."/>
            <person name="Graves T."/>
            <person name="Zhou S."/>
            <person name="Teague B."/>
            <person name="Potamousis K."/>
            <person name="Churas C."/>
            <person name="Place M."/>
            <person name="Herschleb J."/>
            <person name="Runnheim R."/>
            <person name="Forrest D."/>
            <person name="Amos-Landgraf J."/>
            <person name="Schwartz D.C."/>
            <person name="Cheng Z."/>
            <person name="Lindblad-Toh K."/>
            <person name="Eichler E.E."/>
            <person name="Ponting C.P."/>
        </authorList>
    </citation>
    <scope>NUCLEOTIDE SEQUENCE [LARGE SCALE GENOMIC DNA]</scope>
    <source>
        <strain>C57BL/6J</strain>
    </source>
</reference>
<reference evidence="8" key="4">
    <citation type="journal article" date="2004" name="Genome Res.">
        <title>The status, quality, and expansion of the NIH full-length cDNA project: the Mammalian Gene Collection (MGC).</title>
        <authorList>
            <consortium name="The MGC Project Team"/>
        </authorList>
    </citation>
    <scope>NUCLEOTIDE SEQUENCE [LARGE SCALE MRNA]</scope>
    <source>
        <strain evidence="3">C57BL/6J</strain>
        <tissue evidence="8">Embryo</tissue>
    </source>
</reference>
<reference key="5">
    <citation type="journal article" date="2007" name="Am. J. Pathol.">
        <title>Protein characterization of NA+-independent system L amino acid transporter 3 in mice: a potential role in supply of branched-chain amino acids under nutrient starvation.</title>
        <authorList>
            <person name="Fukuhara D."/>
            <person name="Kanai Y."/>
            <person name="Chairoungdua A."/>
            <person name="Babu E."/>
            <person name="Bessho F."/>
            <person name="Kawano T."/>
            <person name="Akimoto Y."/>
            <person name="Endou H."/>
            <person name="Yan K."/>
        </authorList>
    </citation>
    <scope>FUNCTION</scope>
    <scope>TRANSPORTER ACTIVITY</scope>
    <scope>SUBCELLULAR LOCATION</scope>
    <scope>TISSUE SPECIFICITY</scope>
    <scope>INDUCTION</scope>
</reference>
<reference key="6">
    <citation type="journal article" date="2007" name="Proc. Natl. Acad. Sci. U.S.A.">
        <title>Large-scale phosphorylation analysis of mouse liver.</title>
        <authorList>
            <person name="Villen J."/>
            <person name="Beausoleil S.A."/>
            <person name="Gerber S.A."/>
            <person name="Gygi S.P."/>
        </authorList>
    </citation>
    <scope>PHOSPHORYLATION [LARGE SCALE ANALYSIS] AT SER-398</scope>
    <scope>IDENTIFICATION BY MASS SPECTROMETRY [LARGE SCALE ANALYSIS]</scope>
    <source>
        <tissue>Liver</tissue>
    </source>
</reference>
<reference key="7">
    <citation type="journal article" date="2009" name="J. Am. Soc. Nephrol.">
        <title>Amino acid transporter LAT3 is required for podocyte development and function.</title>
        <authorList>
            <person name="Sekine Y."/>
            <person name="Nishibori Y."/>
            <person name="Akimoto Y."/>
            <person name="Kudo A."/>
            <person name="Ito N."/>
            <person name="Fukuhara D."/>
            <person name="Kurayama R."/>
            <person name="Higashihara E."/>
            <person name="Babu E."/>
            <person name="Kanai Y."/>
            <person name="Asanuma K."/>
            <person name="Nagata M."/>
            <person name="Majumdar A."/>
            <person name="Tryggvason K."/>
            <person name="Yan K."/>
        </authorList>
    </citation>
    <scope>TISSUE SPECIFICITY</scope>
    <scope>INDUCTION</scope>
</reference>
<reference key="8">
    <citation type="journal article" date="2009" name="Nat. Biotechnol.">
        <title>Mass-spectrometric identification and relative quantification of N-linked cell surface glycoproteins.</title>
        <authorList>
            <person name="Wollscheid B."/>
            <person name="Bausch-Fluck D."/>
            <person name="Henderson C."/>
            <person name="O'Brien R."/>
            <person name="Bibel M."/>
            <person name="Schiess R."/>
            <person name="Aebersold R."/>
            <person name="Watts J.D."/>
        </authorList>
    </citation>
    <scope>GLYCOSYLATION [LARGE SCALE ANALYSIS] AT ASN-57</scope>
</reference>
<reference key="9">
    <citation type="journal article" date="2010" name="Cell">
        <title>A tissue-specific atlas of mouse protein phosphorylation and expression.</title>
        <authorList>
            <person name="Huttlin E.L."/>
            <person name="Jedrychowski M.P."/>
            <person name="Elias J.E."/>
            <person name="Goswami T."/>
            <person name="Rad R."/>
            <person name="Beausoleil S.A."/>
            <person name="Villen J."/>
            <person name="Haas W."/>
            <person name="Sowa M.E."/>
            <person name="Gygi S.P."/>
        </authorList>
    </citation>
    <scope>PHOSPHORYLATION [LARGE SCALE ANALYSIS] AT SER-398</scope>
    <scope>IDENTIFICATION BY MASS SPECTROMETRY [LARGE SCALE ANALYSIS]</scope>
    <source>
        <tissue>Brown adipose tissue</tissue>
        <tissue>Heart</tissue>
        <tissue>Kidney</tissue>
        <tissue>Liver</tissue>
        <tissue>Lung</tissue>
        <tissue>Pancreas</tissue>
        <tissue>Spleen</tissue>
    </source>
</reference>
<evidence type="ECO:0000250" key="1">
    <source>
        <dbReference type="UniProtKB" id="O75387"/>
    </source>
</evidence>
<evidence type="ECO:0000255" key="2"/>
<evidence type="ECO:0000269" key="3">
    <source>
    </source>
</evidence>
<evidence type="ECO:0000269" key="4">
    <source>
    </source>
</evidence>
<evidence type="ECO:0000269" key="5">
    <source>
    </source>
</evidence>
<evidence type="ECO:0000269" key="6">
    <source>
    </source>
</evidence>
<evidence type="ECO:0000305" key="7"/>
<evidence type="ECO:0000312" key="8">
    <source>
        <dbReference type="EMBL" id="AAH53747.1"/>
    </source>
</evidence>
<evidence type="ECO:0000312" key="9">
    <source>
        <dbReference type="EMBL" id="BAD10947.1"/>
    </source>
</evidence>
<evidence type="ECO:0000312" key="10">
    <source>
        <dbReference type="MGI" id="MGI:1931352"/>
    </source>
</evidence>
<evidence type="ECO:0007744" key="11">
    <source>
    </source>
</evidence>
<evidence type="ECO:0007744" key="12">
    <source>
    </source>
</evidence>
<keyword id="KW-0029">Amino-acid transport</keyword>
<keyword id="KW-1003">Cell membrane</keyword>
<keyword id="KW-0256">Endoplasmic reticulum</keyword>
<keyword id="KW-0325">Glycoprotein</keyword>
<keyword id="KW-0472">Membrane</keyword>
<keyword id="KW-0597">Phosphoprotein</keyword>
<keyword id="KW-1185">Reference proteome</keyword>
<keyword id="KW-0812">Transmembrane</keyword>
<keyword id="KW-1133">Transmembrane helix</keyword>
<keyword id="KW-0813">Transport</keyword>
<dbReference type="EMBL" id="AB103034">
    <property type="protein sequence ID" value="BAD10947.1"/>
    <property type="molecule type" value="mRNA"/>
</dbReference>
<dbReference type="EMBL" id="AK011417">
    <property type="protein sequence ID" value="BAB27605.1"/>
    <property type="status" value="ALT_FRAME"/>
    <property type="molecule type" value="mRNA"/>
</dbReference>
<dbReference type="EMBL" id="AK031215">
    <property type="protein sequence ID" value="BAC27305.1"/>
    <property type="status" value="ALT_FRAME"/>
    <property type="molecule type" value="mRNA"/>
</dbReference>
<dbReference type="EMBL" id="AL928914">
    <property type="status" value="NOT_ANNOTATED_CDS"/>
    <property type="molecule type" value="Genomic_DNA"/>
</dbReference>
<dbReference type="EMBL" id="BC053747">
    <property type="protein sequence ID" value="AAH53747.1"/>
    <property type="molecule type" value="mRNA"/>
</dbReference>
<dbReference type="CCDS" id="CCDS38163.1"/>
<dbReference type="RefSeq" id="NP_001077278.1">
    <property type="nucleotide sequence ID" value="NM_001083809.1"/>
</dbReference>
<dbReference type="RefSeq" id="NP_078773.1">
    <property type="nucleotide sequence ID" value="NM_024497.1"/>
</dbReference>
<dbReference type="RefSeq" id="XP_006500293.1">
    <property type="nucleotide sequence ID" value="XM_006500230.4"/>
</dbReference>
<dbReference type="BioGRID" id="215358">
    <property type="interactions" value="1"/>
</dbReference>
<dbReference type="FunCoup" id="Q8BSM7">
    <property type="interactions" value="101"/>
</dbReference>
<dbReference type="STRING" id="10090.ENSMUSP00000028469"/>
<dbReference type="GlyCosmos" id="Q8BSM7">
    <property type="glycosylation" value="4 sites, No reported glycans"/>
</dbReference>
<dbReference type="GlyGen" id="Q8BSM7">
    <property type="glycosylation" value="4 sites"/>
</dbReference>
<dbReference type="iPTMnet" id="Q8BSM7"/>
<dbReference type="PhosphoSitePlus" id="Q8BSM7"/>
<dbReference type="SwissPalm" id="Q8BSM7"/>
<dbReference type="jPOST" id="Q8BSM7"/>
<dbReference type="PaxDb" id="10090-ENSMUSP00000107252"/>
<dbReference type="ProteomicsDB" id="264976"/>
<dbReference type="Antibodypedia" id="14174">
    <property type="antibodies" value="108 antibodies from 23 providers"/>
</dbReference>
<dbReference type="DNASU" id="72401"/>
<dbReference type="Ensembl" id="ENSMUST00000111624.8">
    <property type="protein sequence ID" value="ENSMUSP00000107251.2"/>
    <property type="gene ID" value="ENSMUSG00000027075.17"/>
</dbReference>
<dbReference type="Ensembl" id="ENSMUST00000121114.8">
    <property type="protein sequence ID" value="ENSMUSP00000112642.2"/>
    <property type="gene ID" value="ENSMUSG00000027075.17"/>
</dbReference>
<dbReference type="GeneID" id="72401"/>
<dbReference type="KEGG" id="mmu:72401"/>
<dbReference type="UCSC" id="uc008kjk.1">
    <property type="organism name" value="mouse"/>
</dbReference>
<dbReference type="AGR" id="MGI:1931352"/>
<dbReference type="CTD" id="8501"/>
<dbReference type="MGI" id="MGI:1931352">
    <property type="gene designation" value="Slc43a1"/>
</dbReference>
<dbReference type="VEuPathDB" id="HostDB:ENSMUSG00000027075"/>
<dbReference type="eggNOG" id="ENOG502QUZ1">
    <property type="taxonomic scope" value="Eukaryota"/>
</dbReference>
<dbReference type="GeneTree" id="ENSGT00940000153576"/>
<dbReference type="HOGENOM" id="CLU_035676_0_0_1"/>
<dbReference type="InParanoid" id="Q8BSM7"/>
<dbReference type="OMA" id="RMSFDAF"/>
<dbReference type="OrthoDB" id="330047at2759"/>
<dbReference type="PhylomeDB" id="Q8BSM7"/>
<dbReference type="Reactome" id="R-MMU-352230">
    <property type="pathway name" value="Amino acid transport across the plasma membrane"/>
</dbReference>
<dbReference type="BioGRID-ORCS" id="72401">
    <property type="hits" value="0 hits in 77 CRISPR screens"/>
</dbReference>
<dbReference type="PRO" id="PR:Q8BSM7"/>
<dbReference type="Proteomes" id="UP000000589">
    <property type="component" value="Chromosome 2"/>
</dbReference>
<dbReference type="RNAct" id="Q8BSM7">
    <property type="molecule type" value="protein"/>
</dbReference>
<dbReference type="Bgee" id="ENSMUSG00000027075">
    <property type="expression patterns" value="Expressed in hindlimb stylopod muscle and 115 other cell types or tissues"/>
</dbReference>
<dbReference type="ExpressionAtlas" id="Q8BSM7">
    <property type="expression patterns" value="baseline and differential"/>
</dbReference>
<dbReference type="GO" id="GO:0016324">
    <property type="term" value="C:apical plasma membrane"/>
    <property type="evidence" value="ECO:0007669"/>
    <property type="project" value="UniProtKB-SubCell"/>
</dbReference>
<dbReference type="GO" id="GO:0005789">
    <property type="term" value="C:endoplasmic reticulum membrane"/>
    <property type="evidence" value="ECO:0007669"/>
    <property type="project" value="UniProtKB-SubCell"/>
</dbReference>
<dbReference type="GO" id="GO:0005886">
    <property type="term" value="C:plasma membrane"/>
    <property type="evidence" value="ECO:0000314"/>
    <property type="project" value="UniProtKB"/>
</dbReference>
<dbReference type="GO" id="GO:0098846">
    <property type="term" value="C:podocyte foot"/>
    <property type="evidence" value="ECO:0007669"/>
    <property type="project" value="Ensembl"/>
</dbReference>
<dbReference type="GO" id="GO:0015179">
    <property type="term" value="F:L-amino acid transmembrane transporter activity"/>
    <property type="evidence" value="ECO:0000314"/>
    <property type="project" value="MGI"/>
</dbReference>
<dbReference type="GO" id="GO:0015188">
    <property type="term" value="F:L-isoleucine transmembrane transporter activity"/>
    <property type="evidence" value="ECO:0000314"/>
    <property type="project" value="UniProtKB"/>
</dbReference>
<dbReference type="GO" id="GO:0015190">
    <property type="term" value="F:L-leucine transmembrane transporter activity"/>
    <property type="evidence" value="ECO:0000314"/>
    <property type="project" value="UniProtKB"/>
</dbReference>
<dbReference type="GO" id="GO:0005304">
    <property type="term" value="F:L-valine transmembrane transporter activity"/>
    <property type="evidence" value="ECO:0000314"/>
    <property type="project" value="UniProtKB"/>
</dbReference>
<dbReference type="GO" id="GO:0015175">
    <property type="term" value="F:neutral L-amino acid transmembrane transporter activity"/>
    <property type="evidence" value="ECO:0000314"/>
    <property type="project" value="UniProtKB"/>
</dbReference>
<dbReference type="GO" id="GO:0015818">
    <property type="term" value="P:isoleucine transport"/>
    <property type="evidence" value="ECO:0000314"/>
    <property type="project" value="UniProtKB"/>
</dbReference>
<dbReference type="GO" id="GO:0015807">
    <property type="term" value="P:L-amino acid transport"/>
    <property type="evidence" value="ECO:0000314"/>
    <property type="project" value="MGI"/>
</dbReference>
<dbReference type="GO" id="GO:0015820">
    <property type="term" value="P:L-leucine transport"/>
    <property type="evidence" value="ECO:0000314"/>
    <property type="project" value="UniProtKB"/>
</dbReference>
<dbReference type="GO" id="GO:1903785">
    <property type="term" value="P:L-valine transmembrane transport"/>
    <property type="evidence" value="ECO:0000314"/>
    <property type="project" value="UniProtKB"/>
</dbReference>
<dbReference type="GO" id="GO:1905533">
    <property type="term" value="P:negative regulation of L-leucine import across plasma membrane"/>
    <property type="evidence" value="ECO:0007669"/>
    <property type="project" value="Ensembl"/>
</dbReference>
<dbReference type="GO" id="GO:0015804">
    <property type="term" value="P:neutral amino acid transport"/>
    <property type="evidence" value="ECO:0000314"/>
    <property type="project" value="UniProtKB"/>
</dbReference>
<dbReference type="Gene3D" id="1.20.1250.20">
    <property type="entry name" value="MFS general substrate transporter like domains"/>
    <property type="match status" value="1"/>
</dbReference>
<dbReference type="InterPro" id="IPR011701">
    <property type="entry name" value="MFS"/>
</dbReference>
<dbReference type="InterPro" id="IPR036259">
    <property type="entry name" value="MFS_trans_sf"/>
</dbReference>
<dbReference type="PANTHER" id="PTHR20766:SF0">
    <property type="entry name" value="LARGE NEUTRAL AMINO ACIDS TRANSPORTER SMALL SUBUNIT 3"/>
    <property type="match status" value="1"/>
</dbReference>
<dbReference type="PANTHER" id="PTHR20766">
    <property type="entry name" value="LARGE NEUTRAL AMINO ACIDS TRANSPORTER SMALL SUBUNIT 4-LIKE ISOFORM X1"/>
    <property type="match status" value="1"/>
</dbReference>
<dbReference type="Pfam" id="PF07690">
    <property type="entry name" value="MFS_1"/>
    <property type="match status" value="1"/>
</dbReference>
<dbReference type="SUPFAM" id="SSF103473">
    <property type="entry name" value="MFS general substrate transporter"/>
    <property type="match status" value="1"/>
</dbReference>
<sequence length="564" mass="62644">MAPTLKQAYRRRWWMACTAVVENLFFSAVLLGWASLLIMLKKEGFYSSLCPAENRTNTTQDEQHQWTSCDQQEKMLNLGFTIGSFLLSATTLPLGILMDRFGPRPLRLVGSACFAASCTLMALASRDTEVLSPLIFLALSLNGFAGICLTFTSLTLPNMFGNLRSTFMALMIGSYASSAITFPGIKLIYDAGVPFTVIMFTWSGLACLIFLNCALNWPAEAFPAPEEVDYTKKIKLIGLALDHKVTGDRFYTHVTIVGQRLSQKSPSLEEGADAFISSPDIPGTSEETPEKSVPFRKSLCSPIFLWSLVTMGMTQLRVIFYMGAMNKILEFIVTGGKERETNEQRQKVEETVEFYSSIFGVMQLLCLLTCPLIGYIMDWRIKDCVDAPTEGTLNENASFGDARDGASTKFTRPRYRKVQKLTNAINAFTLTNILLVGFGIACLIKNLHLQLLAFVLHTIVRGFFHSACGGLYAAVFPSNHFGTLTGLQSLISAVFALLQQLLFMAMVGPLHGDPFWVNLGLLLLSFLGFLLPSYLYYYRSRLQREYATNLVDPQKVLNTSKVAT</sequence>